<protein>
    <recommendedName>
        <fullName evidence="1">Small ribosomal subunit protein uS17</fullName>
    </recommendedName>
    <alternativeName>
        <fullName evidence="2">30S ribosomal protein S17</fullName>
    </alternativeName>
</protein>
<accession>Q5WZK3</accession>
<reference key="1">
    <citation type="journal article" date="2004" name="Nat. Genet.">
        <title>Evidence in the Legionella pneumophila genome for exploitation of host cell functions and high genome plasticity.</title>
        <authorList>
            <person name="Cazalet C."/>
            <person name="Rusniok C."/>
            <person name="Brueggemann H."/>
            <person name="Zidane N."/>
            <person name="Magnier A."/>
            <person name="Ma L."/>
            <person name="Tichit M."/>
            <person name="Jarraud S."/>
            <person name="Bouchier C."/>
            <person name="Vandenesch F."/>
            <person name="Kunst F."/>
            <person name="Etienne J."/>
            <person name="Glaser P."/>
            <person name="Buchrieser C."/>
        </authorList>
    </citation>
    <scope>NUCLEOTIDE SEQUENCE [LARGE SCALE GENOMIC DNA]</scope>
    <source>
        <strain>Lens</strain>
    </source>
</reference>
<sequence>MSTNSESNARTMIGKVVSDKMDKTIVVMIERTVKHPKYGKIMKRRTKLHAHDENQVCRVGNTVKIRESRPLSKTKSWVLVEVIS</sequence>
<proteinExistence type="inferred from homology"/>
<name>RS17_LEGPL</name>
<organism>
    <name type="scientific">Legionella pneumophila (strain Lens)</name>
    <dbReference type="NCBI Taxonomy" id="297245"/>
    <lineage>
        <taxon>Bacteria</taxon>
        <taxon>Pseudomonadati</taxon>
        <taxon>Pseudomonadota</taxon>
        <taxon>Gammaproteobacteria</taxon>
        <taxon>Legionellales</taxon>
        <taxon>Legionellaceae</taxon>
        <taxon>Legionella</taxon>
    </lineage>
</organism>
<evidence type="ECO:0000255" key="1">
    <source>
        <dbReference type="HAMAP-Rule" id="MF_01345"/>
    </source>
</evidence>
<evidence type="ECO:0000305" key="2"/>
<dbReference type="EMBL" id="CR628337">
    <property type="protein sequence ID" value="CAH14609.1"/>
    <property type="molecule type" value="Genomic_DNA"/>
</dbReference>
<dbReference type="RefSeq" id="WP_010946087.1">
    <property type="nucleotide sequence ID" value="NC_006369.1"/>
</dbReference>
<dbReference type="SMR" id="Q5WZK3"/>
<dbReference type="GeneID" id="57034341"/>
<dbReference type="KEGG" id="lpf:lpl0378"/>
<dbReference type="LegioList" id="lpl0378"/>
<dbReference type="HOGENOM" id="CLU_073626_1_1_6"/>
<dbReference type="Proteomes" id="UP000002517">
    <property type="component" value="Chromosome"/>
</dbReference>
<dbReference type="GO" id="GO:0022627">
    <property type="term" value="C:cytosolic small ribosomal subunit"/>
    <property type="evidence" value="ECO:0007669"/>
    <property type="project" value="TreeGrafter"/>
</dbReference>
<dbReference type="GO" id="GO:0019843">
    <property type="term" value="F:rRNA binding"/>
    <property type="evidence" value="ECO:0007669"/>
    <property type="project" value="UniProtKB-UniRule"/>
</dbReference>
<dbReference type="GO" id="GO:0003735">
    <property type="term" value="F:structural constituent of ribosome"/>
    <property type="evidence" value="ECO:0007669"/>
    <property type="project" value="InterPro"/>
</dbReference>
<dbReference type="GO" id="GO:0006412">
    <property type="term" value="P:translation"/>
    <property type="evidence" value="ECO:0007669"/>
    <property type="project" value="UniProtKB-UniRule"/>
</dbReference>
<dbReference type="CDD" id="cd00364">
    <property type="entry name" value="Ribosomal_uS17"/>
    <property type="match status" value="1"/>
</dbReference>
<dbReference type="Gene3D" id="2.40.50.140">
    <property type="entry name" value="Nucleic acid-binding proteins"/>
    <property type="match status" value="1"/>
</dbReference>
<dbReference type="HAMAP" id="MF_01345_B">
    <property type="entry name" value="Ribosomal_uS17_B"/>
    <property type="match status" value="1"/>
</dbReference>
<dbReference type="InterPro" id="IPR012340">
    <property type="entry name" value="NA-bd_OB-fold"/>
</dbReference>
<dbReference type="InterPro" id="IPR000266">
    <property type="entry name" value="Ribosomal_uS17"/>
</dbReference>
<dbReference type="InterPro" id="IPR019984">
    <property type="entry name" value="Ribosomal_uS17_bact/chlr"/>
</dbReference>
<dbReference type="NCBIfam" id="NF004123">
    <property type="entry name" value="PRK05610.1"/>
    <property type="match status" value="1"/>
</dbReference>
<dbReference type="NCBIfam" id="TIGR03635">
    <property type="entry name" value="uS17_bact"/>
    <property type="match status" value="1"/>
</dbReference>
<dbReference type="PANTHER" id="PTHR10744">
    <property type="entry name" value="40S RIBOSOMAL PROTEIN S11 FAMILY MEMBER"/>
    <property type="match status" value="1"/>
</dbReference>
<dbReference type="PANTHER" id="PTHR10744:SF1">
    <property type="entry name" value="SMALL RIBOSOMAL SUBUNIT PROTEIN US17M"/>
    <property type="match status" value="1"/>
</dbReference>
<dbReference type="Pfam" id="PF00366">
    <property type="entry name" value="Ribosomal_S17"/>
    <property type="match status" value="1"/>
</dbReference>
<dbReference type="PRINTS" id="PR00973">
    <property type="entry name" value="RIBOSOMALS17"/>
</dbReference>
<dbReference type="SUPFAM" id="SSF50249">
    <property type="entry name" value="Nucleic acid-binding proteins"/>
    <property type="match status" value="1"/>
</dbReference>
<feature type="chain" id="PRO_0000233495" description="Small ribosomal subunit protein uS17">
    <location>
        <begin position="1"/>
        <end position="84"/>
    </location>
</feature>
<comment type="function">
    <text evidence="1">One of the primary rRNA binding proteins, it binds specifically to the 5'-end of 16S ribosomal RNA.</text>
</comment>
<comment type="subunit">
    <text evidence="1">Part of the 30S ribosomal subunit.</text>
</comment>
<comment type="similarity">
    <text evidence="1">Belongs to the universal ribosomal protein uS17 family.</text>
</comment>
<keyword id="KW-0687">Ribonucleoprotein</keyword>
<keyword id="KW-0689">Ribosomal protein</keyword>
<keyword id="KW-0694">RNA-binding</keyword>
<keyword id="KW-0699">rRNA-binding</keyword>
<gene>
    <name evidence="1" type="primary">rpsQ</name>
    <name type="ordered locus">lpl0378</name>
</gene>